<name>RS11_PROM5</name>
<organism>
    <name type="scientific">Prochlorococcus marinus (strain MIT 9515)</name>
    <dbReference type="NCBI Taxonomy" id="167542"/>
    <lineage>
        <taxon>Bacteria</taxon>
        <taxon>Bacillati</taxon>
        <taxon>Cyanobacteriota</taxon>
        <taxon>Cyanophyceae</taxon>
        <taxon>Synechococcales</taxon>
        <taxon>Prochlorococcaceae</taxon>
        <taxon>Prochlorococcus</taxon>
    </lineage>
</organism>
<accession>A2BYR4</accession>
<reference key="1">
    <citation type="journal article" date="2007" name="PLoS Genet.">
        <title>Patterns and implications of gene gain and loss in the evolution of Prochlorococcus.</title>
        <authorList>
            <person name="Kettler G.C."/>
            <person name="Martiny A.C."/>
            <person name="Huang K."/>
            <person name="Zucker J."/>
            <person name="Coleman M.L."/>
            <person name="Rodrigue S."/>
            <person name="Chen F."/>
            <person name="Lapidus A."/>
            <person name="Ferriera S."/>
            <person name="Johnson J."/>
            <person name="Steglich C."/>
            <person name="Church G.M."/>
            <person name="Richardson P."/>
            <person name="Chisholm S.W."/>
        </authorList>
    </citation>
    <scope>NUCLEOTIDE SEQUENCE [LARGE SCALE GENOMIC DNA]</scope>
    <source>
        <strain>MIT 9515</strain>
    </source>
</reference>
<evidence type="ECO:0000255" key="1">
    <source>
        <dbReference type="HAMAP-Rule" id="MF_01310"/>
    </source>
</evidence>
<evidence type="ECO:0000305" key="2"/>
<comment type="function">
    <text evidence="1">Located on the platform of the 30S subunit, it bridges several disparate RNA helices of the 16S rRNA. Forms part of the Shine-Dalgarno cleft in the 70S ribosome.</text>
</comment>
<comment type="subunit">
    <text evidence="1">Part of the 30S ribosomal subunit. Interacts with proteins S7 and S18. Binds to IF-3.</text>
</comment>
<comment type="similarity">
    <text evidence="1">Belongs to the universal ribosomal protein uS11 family.</text>
</comment>
<keyword id="KW-0687">Ribonucleoprotein</keyword>
<keyword id="KW-0689">Ribosomal protein</keyword>
<keyword id="KW-0694">RNA-binding</keyword>
<keyword id="KW-0699">rRNA-binding</keyword>
<gene>
    <name evidence="1" type="primary">rpsK</name>
    <name evidence="1" type="synonym">rps11</name>
    <name type="ordered locus">P9515_17181</name>
</gene>
<proteinExistence type="inferred from homology"/>
<sequence>MAAPVKKTGSKKSKKNVPNGVVHIQSTFNNTIVSISDTSGHVISWSSAGASGFKGARKGTPFAAQTAAEAAAKRALDQGMRQIEVLVRGPGSGRETAIRALQVAGLEITLIRDVTPLPHNGCRRPKRRRV</sequence>
<dbReference type="EMBL" id="CP000552">
    <property type="protein sequence ID" value="ABM72925.1"/>
    <property type="molecule type" value="Genomic_DNA"/>
</dbReference>
<dbReference type="RefSeq" id="WP_011821017.1">
    <property type="nucleotide sequence ID" value="NC_008817.1"/>
</dbReference>
<dbReference type="SMR" id="A2BYR4"/>
<dbReference type="STRING" id="167542.P9515_17181"/>
<dbReference type="GeneID" id="60202028"/>
<dbReference type="KEGG" id="pmc:P9515_17181"/>
<dbReference type="eggNOG" id="COG0100">
    <property type="taxonomic scope" value="Bacteria"/>
</dbReference>
<dbReference type="HOGENOM" id="CLU_072439_5_0_3"/>
<dbReference type="OrthoDB" id="9806415at2"/>
<dbReference type="Proteomes" id="UP000001589">
    <property type="component" value="Chromosome"/>
</dbReference>
<dbReference type="GO" id="GO:1990904">
    <property type="term" value="C:ribonucleoprotein complex"/>
    <property type="evidence" value="ECO:0007669"/>
    <property type="project" value="UniProtKB-KW"/>
</dbReference>
<dbReference type="GO" id="GO:0005840">
    <property type="term" value="C:ribosome"/>
    <property type="evidence" value="ECO:0007669"/>
    <property type="project" value="UniProtKB-KW"/>
</dbReference>
<dbReference type="GO" id="GO:0019843">
    <property type="term" value="F:rRNA binding"/>
    <property type="evidence" value="ECO:0007669"/>
    <property type="project" value="UniProtKB-UniRule"/>
</dbReference>
<dbReference type="GO" id="GO:0003735">
    <property type="term" value="F:structural constituent of ribosome"/>
    <property type="evidence" value="ECO:0007669"/>
    <property type="project" value="InterPro"/>
</dbReference>
<dbReference type="GO" id="GO:0006412">
    <property type="term" value="P:translation"/>
    <property type="evidence" value="ECO:0007669"/>
    <property type="project" value="UniProtKB-UniRule"/>
</dbReference>
<dbReference type="FunFam" id="3.30.420.80:FF:000001">
    <property type="entry name" value="30S ribosomal protein S11"/>
    <property type="match status" value="1"/>
</dbReference>
<dbReference type="Gene3D" id="3.30.420.80">
    <property type="entry name" value="Ribosomal protein S11"/>
    <property type="match status" value="1"/>
</dbReference>
<dbReference type="HAMAP" id="MF_01310">
    <property type="entry name" value="Ribosomal_uS11"/>
    <property type="match status" value="1"/>
</dbReference>
<dbReference type="InterPro" id="IPR001971">
    <property type="entry name" value="Ribosomal_uS11"/>
</dbReference>
<dbReference type="InterPro" id="IPR019981">
    <property type="entry name" value="Ribosomal_uS11_bac-type"/>
</dbReference>
<dbReference type="InterPro" id="IPR018102">
    <property type="entry name" value="Ribosomal_uS11_CS"/>
</dbReference>
<dbReference type="InterPro" id="IPR036967">
    <property type="entry name" value="Ribosomal_uS11_sf"/>
</dbReference>
<dbReference type="NCBIfam" id="NF003698">
    <property type="entry name" value="PRK05309.1"/>
    <property type="match status" value="1"/>
</dbReference>
<dbReference type="NCBIfam" id="TIGR03632">
    <property type="entry name" value="uS11_bact"/>
    <property type="match status" value="1"/>
</dbReference>
<dbReference type="PANTHER" id="PTHR11759">
    <property type="entry name" value="40S RIBOSOMAL PROTEIN S14/30S RIBOSOMAL PROTEIN S11"/>
    <property type="match status" value="1"/>
</dbReference>
<dbReference type="Pfam" id="PF00411">
    <property type="entry name" value="Ribosomal_S11"/>
    <property type="match status" value="1"/>
</dbReference>
<dbReference type="PIRSF" id="PIRSF002131">
    <property type="entry name" value="Ribosomal_S11"/>
    <property type="match status" value="1"/>
</dbReference>
<dbReference type="SUPFAM" id="SSF53137">
    <property type="entry name" value="Translational machinery components"/>
    <property type="match status" value="1"/>
</dbReference>
<dbReference type="PROSITE" id="PS00054">
    <property type="entry name" value="RIBOSOMAL_S11"/>
    <property type="match status" value="1"/>
</dbReference>
<protein>
    <recommendedName>
        <fullName evidence="1">Small ribosomal subunit protein uS11</fullName>
    </recommendedName>
    <alternativeName>
        <fullName evidence="2">30S ribosomal protein S11</fullName>
    </alternativeName>
</protein>
<feature type="chain" id="PRO_0000294823" description="Small ribosomal subunit protein uS11">
    <location>
        <begin position="1"/>
        <end position="130"/>
    </location>
</feature>